<gene>
    <name type="primary">pdlim7</name>
</gene>
<protein>
    <recommendedName>
        <fullName>PDZ and LIM domain protein 7</fullName>
    </recommendedName>
</protein>
<feature type="chain" id="PRO_0000075886" description="PDZ and LIM domain protein 7">
    <location>
        <begin position="1"/>
        <end position="421"/>
    </location>
</feature>
<feature type="domain" description="PDZ" evidence="3">
    <location>
        <begin position="1"/>
        <end position="85"/>
    </location>
</feature>
<feature type="domain" description="LIM zinc-binding 1" evidence="2">
    <location>
        <begin position="244"/>
        <end position="302"/>
    </location>
</feature>
<feature type="domain" description="LIM zinc-binding 2" evidence="2">
    <location>
        <begin position="303"/>
        <end position="362"/>
    </location>
</feature>
<feature type="domain" description="LIM zinc-binding 3" evidence="2">
    <location>
        <begin position="363"/>
        <end position="421"/>
    </location>
</feature>
<feature type="region of interest" description="Disordered" evidence="4">
    <location>
        <begin position="115"/>
        <end position="193"/>
    </location>
</feature>
<feature type="compositionally biased region" description="Polar residues" evidence="4">
    <location>
        <begin position="147"/>
        <end position="172"/>
    </location>
</feature>
<reference key="1">
    <citation type="submission" date="2004-06" db="EMBL/GenBank/DDBJ databases">
        <authorList>
            <consortium name="NIH - Xenopus Gene Collection (XGC) project"/>
        </authorList>
    </citation>
    <scope>NUCLEOTIDE SEQUENCE [LARGE SCALE MRNA]</scope>
    <source>
        <tissue>Ovary</tissue>
    </source>
</reference>
<accession>Q6INU3</accession>
<sequence>MEEYKVTLDGPAPWGFRLQGGKDFNMPLSISRLTPGGKSELAGVNVGDWLLQIEGDSTASMTHIEAQNKIRASSNKLGLVLSRFAVGANHPKGVHTPESQGRKYNFAPSTALNKIARPFGSGTPPPDNSRPVQVTKPVAYNPPPTSYPSSQMPQGQLQNGQKSRTVSNVSGKDTTDHPIPPAPSTGPAVRPPWTTDPTFADRYAPDKTTTVMTKHTQPATPTPAQSRNSILQAAQVPSSGDKTPVCSQCNKIIRGRFLLALGRYYHPEEFTCSQCHKVLEEGGFFEEKGSIFCPCCYDARFAPNCAKCKKKITGEIMHALKMTWHVPCFTCAYCKTPIRNRAFYMEDGKPYCEKDYEQMFGTKCRGCDFKIDAGDRFLEALGFSWHDTCFVCAICQINLEGKTFYSKKDKPLCKTHAFSNV</sequence>
<comment type="function">
    <text evidence="1">May function as a scaffold on which the coordinated assembly of proteins can occur. May play a role as an adapter that, via its PDZ domain, localizes LIM-binding proteins to actin filaments of both skeletal muscle and nonmuscle tissues (By similarity).</text>
</comment>
<comment type="subcellular location">
    <subcellularLocation>
        <location evidence="1">Cytoplasm</location>
        <location evidence="1">Cytoskeleton</location>
    </subcellularLocation>
</comment>
<comment type="domain">
    <text evidence="1">The LIM zinc-binding 3 (LIM 3) domain provides the structural basis for recognition of tyrosine-containing tight turn structures.</text>
</comment>
<comment type="domain">
    <text evidence="1">Anchored to cell periphery via its N-terminal PDZ domain.</text>
</comment>
<evidence type="ECO:0000250" key="1"/>
<evidence type="ECO:0000255" key="2">
    <source>
        <dbReference type="PROSITE-ProRule" id="PRU00125"/>
    </source>
</evidence>
<evidence type="ECO:0000255" key="3">
    <source>
        <dbReference type="PROSITE-ProRule" id="PRU00143"/>
    </source>
</evidence>
<evidence type="ECO:0000256" key="4">
    <source>
        <dbReference type="SAM" id="MobiDB-lite"/>
    </source>
</evidence>
<proteinExistence type="evidence at transcript level"/>
<dbReference type="EMBL" id="BC072179">
    <property type="protein sequence ID" value="AAH72179.1"/>
    <property type="molecule type" value="mRNA"/>
</dbReference>
<dbReference type="SMR" id="Q6INU3"/>
<dbReference type="IntAct" id="Q6INU3">
    <property type="interactions" value="1"/>
</dbReference>
<dbReference type="OMA" id="KECFICA"/>
<dbReference type="Proteomes" id="UP000186698">
    <property type="component" value="Unplaced"/>
</dbReference>
<dbReference type="GO" id="GO:0005912">
    <property type="term" value="C:adherens junction"/>
    <property type="evidence" value="ECO:0000318"/>
    <property type="project" value="GO_Central"/>
</dbReference>
<dbReference type="GO" id="GO:0031941">
    <property type="term" value="C:filamentous actin"/>
    <property type="evidence" value="ECO:0000318"/>
    <property type="project" value="GO_Central"/>
</dbReference>
<dbReference type="GO" id="GO:0001725">
    <property type="term" value="C:stress fiber"/>
    <property type="evidence" value="ECO:0000318"/>
    <property type="project" value="GO_Central"/>
</dbReference>
<dbReference type="GO" id="GO:0030018">
    <property type="term" value="C:Z disc"/>
    <property type="evidence" value="ECO:0000318"/>
    <property type="project" value="GO_Central"/>
</dbReference>
<dbReference type="GO" id="GO:0003779">
    <property type="term" value="F:actin binding"/>
    <property type="evidence" value="ECO:0000318"/>
    <property type="project" value="GO_Central"/>
</dbReference>
<dbReference type="GO" id="GO:0046872">
    <property type="term" value="F:metal ion binding"/>
    <property type="evidence" value="ECO:0007669"/>
    <property type="project" value="UniProtKB-KW"/>
</dbReference>
<dbReference type="GO" id="GO:0051371">
    <property type="term" value="F:muscle alpha-actinin binding"/>
    <property type="evidence" value="ECO:0000318"/>
    <property type="project" value="GO_Central"/>
</dbReference>
<dbReference type="GO" id="GO:0030036">
    <property type="term" value="P:actin cytoskeleton organization"/>
    <property type="evidence" value="ECO:0000318"/>
    <property type="project" value="GO_Central"/>
</dbReference>
<dbReference type="GO" id="GO:0007507">
    <property type="term" value="P:heart development"/>
    <property type="evidence" value="ECO:0000318"/>
    <property type="project" value="GO_Central"/>
</dbReference>
<dbReference type="GO" id="GO:0061061">
    <property type="term" value="P:muscle structure development"/>
    <property type="evidence" value="ECO:0000318"/>
    <property type="project" value="GO_Central"/>
</dbReference>
<dbReference type="CDD" id="cd09452">
    <property type="entry name" value="LIM1_Enigma"/>
    <property type="match status" value="1"/>
</dbReference>
<dbReference type="CDD" id="cd09456">
    <property type="entry name" value="LIM2_Enigma"/>
    <property type="match status" value="1"/>
</dbReference>
<dbReference type="CDD" id="cd09458">
    <property type="entry name" value="LIM3_Enigma"/>
    <property type="match status" value="1"/>
</dbReference>
<dbReference type="CDD" id="cd06753">
    <property type="entry name" value="PDZ_PDLIM-like"/>
    <property type="match status" value="1"/>
</dbReference>
<dbReference type="FunFam" id="2.30.42.10:FF:000019">
    <property type="entry name" value="LIM domain binding 3 isoform 1"/>
    <property type="match status" value="1"/>
</dbReference>
<dbReference type="FunFam" id="2.10.110.10:FF:000010">
    <property type="entry name" value="PDZ and LIM domain protein 5"/>
    <property type="match status" value="1"/>
</dbReference>
<dbReference type="FunFam" id="2.10.110.10:FF:000014">
    <property type="entry name" value="PDZ and LIM domain protein 5"/>
    <property type="match status" value="1"/>
</dbReference>
<dbReference type="FunFam" id="2.10.110.10:FF:000020">
    <property type="entry name" value="PDZ and LIM domain protein 5"/>
    <property type="match status" value="1"/>
</dbReference>
<dbReference type="Gene3D" id="2.30.42.10">
    <property type="match status" value="1"/>
</dbReference>
<dbReference type="Gene3D" id="2.10.110.10">
    <property type="entry name" value="Cysteine Rich Protein"/>
    <property type="match status" value="3"/>
</dbReference>
<dbReference type="InterPro" id="IPR001478">
    <property type="entry name" value="PDZ"/>
</dbReference>
<dbReference type="InterPro" id="IPR050604">
    <property type="entry name" value="PDZ-LIM_domain"/>
</dbReference>
<dbReference type="InterPro" id="IPR036034">
    <property type="entry name" value="PDZ_sf"/>
</dbReference>
<dbReference type="InterPro" id="IPR001781">
    <property type="entry name" value="Znf_LIM"/>
</dbReference>
<dbReference type="PANTHER" id="PTHR24214:SF0">
    <property type="entry name" value="PDZ AND LIM DOMAIN PROTEIN 7"/>
    <property type="match status" value="1"/>
</dbReference>
<dbReference type="PANTHER" id="PTHR24214">
    <property type="entry name" value="PDZ AND LIM DOMAIN PROTEIN ZASP"/>
    <property type="match status" value="1"/>
</dbReference>
<dbReference type="Pfam" id="PF00412">
    <property type="entry name" value="LIM"/>
    <property type="match status" value="3"/>
</dbReference>
<dbReference type="Pfam" id="PF00595">
    <property type="entry name" value="PDZ"/>
    <property type="match status" value="1"/>
</dbReference>
<dbReference type="SMART" id="SM00132">
    <property type="entry name" value="LIM"/>
    <property type="match status" value="3"/>
</dbReference>
<dbReference type="SMART" id="SM00228">
    <property type="entry name" value="PDZ"/>
    <property type="match status" value="1"/>
</dbReference>
<dbReference type="SUPFAM" id="SSF57716">
    <property type="entry name" value="Glucocorticoid receptor-like (DNA-binding domain)"/>
    <property type="match status" value="4"/>
</dbReference>
<dbReference type="SUPFAM" id="SSF50156">
    <property type="entry name" value="PDZ domain-like"/>
    <property type="match status" value="1"/>
</dbReference>
<dbReference type="PROSITE" id="PS00478">
    <property type="entry name" value="LIM_DOMAIN_1"/>
    <property type="match status" value="2"/>
</dbReference>
<dbReference type="PROSITE" id="PS50023">
    <property type="entry name" value="LIM_DOMAIN_2"/>
    <property type="match status" value="3"/>
</dbReference>
<dbReference type="PROSITE" id="PS50106">
    <property type="entry name" value="PDZ"/>
    <property type="match status" value="1"/>
</dbReference>
<keyword id="KW-0963">Cytoplasm</keyword>
<keyword id="KW-0206">Cytoskeleton</keyword>
<keyword id="KW-0440">LIM domain</keyword>
<keyword id="KW-0479">Metal-binding</keyword>
<keyword id="KW-1185">Reference proteome</keyword>
<keyword id="KW-0677">Repeat</keyword>
<keyword id="KW-0862">Zinc</keyword>
<name>PDLI7_XENLA</name>
<organism>
    <name type="scientific">Xenopus laevis</name>
    <name type="common">African clawed frog</name>
    <dbReference type="NCBI Taxonomy" id="8355"/>
    <lineage>
        <taxon>Eukaryota</taxon>
        <taxon>Metazoa</taxon>
        <taxon>Chordata</taxon>
        <taxon>Craniata</taxon>
        <taxon>Vertebrata</taxon>
        <taxon>Euteleostomi</taxon>
        <taxon>Amphibia</taxon>
        <taxon>Batrachia</taxon>
        <taxon>Anura</taxon>
        <taxon>Pipoidea</taxon>
        <taxon>Pipidae</taxon>
        <taxon>Xenopodinae</taxon>
        <taxon>Xenopus</taxon>
        <taxon>Xenopus</taxon>
    </lineage>
</organism>